<organism>
    <name type="scientific">Ralstonia nicotianae (strain ATCC BAA-1114 / GMI1000)</name>
    <name type="common">Ralstonia solanacearum</name>
    <dbReference type="NCBI Taxonomy" id="267608"/>
    <lineage>
        <taxon>Bacteria</taxon>
        <taxon>Pseudomonadati</taxon>
        <taxon>Pseudomonadota</taxon>
        <taxon>Betaproteobacteria</taxon>
        <taxon>Burkholderiales</taxon>
        <taxon>Burkholderiaceae</taxon>
        <taxon>Ralstonia</taxon>
        <taxon>Ralstonia solanacearum species complex</taxon>
    </lineage>
</organism>
<evidence type="ECO:0000250" key="1"/>
<evidence type="ECO:0000250" key="2">
    <source>
        <dbReference type="UniProtKB" id="O59284"/>
    </source>
</evidence>
<evidence type="ECO:0000255" key="3"/>
<evidence type="ECO:0000305" key="4"/>
<dbReference type="EC" id="1.1.1.-"/>
<dbReference type="EMBL" id="AL646053">
    <property type="protein sequence ID" value="CAD18167.1"/>
    <property type="molecule type" value="Genomic_DNA"/>
</dbReference>
<dbReference type="SMR" id="P58591"/>
<dbReference type="STRING" id="267608.RSp1016"/>
<dbReference type="EnsemblBacteria" id="CAD18167">
    <property type="protein sequence ID" value="CAD18167"/>
    <property type="gene ID" value="RSp1016"/>
</dbReference>
<dbReference type="KEGG" id="rso:RSp1016"/>
<dbReference type="eggNOG" id="COG0677">
    <property type="taxonomic scope" value="Bacteria"/>
</dbReference>
<dbReference type="HOGENOM" id="CLU_023810_3_2_4"/>
<dbReference type="Proteomes" id="UP000001436">
    <property type="component" value="Plasmid megaplasmid Rsp"/>
</dbReference>
<dbReference type="GO" id="GO:0051287">
    <property type="term" value="F:NAD binding"/>
    <property type="evidence" value="ECO:0007669"/>
    <property type="project" value="InterPro"/>
</dbReference>
<dbReference type="GO" id="GO:0016628">
    <property type="term" value="F:oxidoreductase activity, acting on the CH-CH group of donors, NAD or NADP as acceptor"/>
    <property type="evidence" value="ECO:0007669"/>
    <property type="project" value="InterPro"/>
</dbReference>
<dbReference type="GO" id="GO:0016616">
    <property type="term" value="F:oxidoreductase activity, acting on the CH-OH group of donors, NAD or NADP as acceptor"/>
    <property type="evidence" value="ECO:0007669"/>
    <property type="project" value="InterPro"/>
</dbReference>
<dbReference type="GO" id="GO:0009103">
    <property type="term" value="P:lipopolysaccharide biosynthetic process"/>
    <property type="evidence" value="ECO:0007669"/>
    <property type="project" value="UniProtKB-KW"/>
</dbReference>
<dbReference type="FunFam" id="3.40.50.720:FF:000139">
    <property type="entry name" value="UDP-N-acetyl-D-mannosamine dehydrogenase"/>
    <property type="match status" value="1"/>
</dbReference>
<dbReference type="Gene3D" id="1.20.5.100">
    <property type="entry name" value="Cytochrome c1, transmembrane anchor, C-terminal"/>
    <property type="match status" value="1"/>
</dbReference>
<dbReference type="Gene3D" id="3.40.50.720">
    <property type="entry name" value="NAD(P)-binding Rossmann-like Domain"/>
    <property type="match status" value="2"/>
</dbReference>
<dbReference type="InterPro" id="IPR008927">
    <property type="entry name" value="6-PGluconate_DH-like_C_sf"/>
</dbReference>
<dbReference type="InterPro" id="IPR036291">
    <property type="entry name" value="NAD(P)-bd_dom_sf"/>
</dbReference>
<dbReference type="InterPro" id="IPR017476">
    <property type="entry name" value="UDP-Glc/GDP-Man"/>
</dbReference>
<dbReference type="InterPro" id="IPR014027">
    <property type="entry name" value="UDP-Glc/GDP-Man_DH_C"/>
</dbReference>
<dbReference type="InterPro" id="IPR036220">
    <property type="entry name" value="UDP-Glc/GDP-Man_DH_C_sf"/>
</dbReference>
<dbReference type="InterPro" id="IPR014026">
    <property type="entry name" value="UDP-Glc/GDP-Man_DH_dimer"/>
</dbReference>
<dbReference type="InterPro" id="IPR001732">
    <property type="entry name" value="UDP-Glc/GDP-Man_DH_N"/>
</dbReference>
<dbReference type="InterPro" id="IPR028359">
    <property type="entry name" value="UDP_ManNAc/GlcNAc_DH"/>
</dbReference>
<dbReference type="NCBIfam" id="TIGR03026">
    <property type="entry name" value="NDP-sugDHase"/>
    <property type="match status" value="1"/>
</dbReference>
<dbReference type="NCBIfam" id="NF008286">
    <property type="entry name" value="PRK11064.1"/>
    <property type="match status" value="1"/>
</dbReference>
<dbReference type="PANTHER" id="PTHR43491">
    <property type="entry name" value="UDP-N-ACETYL-D-MANNOSAMINE DEHYDROGENASE"/>
    <property type="match status" value="1"/>
</dbReference>
<dbReference type="PANTHER" id="PTHR43491:SF1">
    <property type="entry name" value="UDP-N-ACETYL-D-MANNOSAMINE DEHYDROGENASE"/>
    <property type="match status" value="1"/>
</dbReference>
<dbReference type="Pfam" id="PF00984">
    <property type="entry name" value="UDPG_MGDP_dh"/>
    <property type="match status" value="1"/>
</dbReference>
<dbReference type="Pfam" id="PF03720">
    <property type="entry name" value="UDPG_MGDP_dh_C"/>
    <property type="match status" value="1"/>
</dbReference>
<dbReference type="Pfam" id="PF03721">
    <property type="entry name" value="UDPG_MGDP_dh_N"/>
    <property type="match status" value="1"/>
</dbReference>
<dbReference type="PIRSF" id="PIRSF500136">
    <property type="entry name" value="UDP_ManNAc_DH"/>
    <property type="match status" value="1"/>
</dbReference>
<dbReference type="PIRSF" id="PIRSF000124">
    <property type="entry name" value="UDPglc_GDPman_dh"/>
    <property type="match status" value="1"/>
</dbReference>
<dbReference type="SMART" id="SM00984">
    <property type="entry name" value="UDPG_MGDP_dh_C"/>
    <property type="match status" value="1"/>
</dbReference>
<dbReference type="SUPFAM" id="SSF48179">
    <property type="entry name" value="6-phosphogluconate dehydrogenase C-terminal domain-like"/>
    <property type="match status" value="1"/>
</dbReference>
<dbReference type="SUPFAM" id="SSF51735">
    <property type="entry name" value="NAD(P)-binding Rossmann-fold domains"/>
    <property type="match status" value="1"/>
</dbReference>
<dbReference type="SUPFAM" id="SSF52413">
    <property type="entry name" value="UDP-glucose/GDP-mannose dehydrogenase C-terminal domain"/>
    <property type="match status" value="1"/>
</dbReference>
<accession>P58591</accession>
<comment type="function">
    <text evidence="1">Probably involved in the synthesis of sugar components of EPS I, by converting NDP-N-acetyl-D-galactosamine into NDP-N-acetyl-D-galactosaminuronic acid.</text>
</comment>
<comment type="similarity">
    <text evidence="4">Belongs to the UDP-glucose/GDP-mannose dehydrogenase family.</text>
</comment>
<sequence>MDRAIDIDFRTISVVGLGYIGLPTATVLASRQREVIGVDINQHAVDTINQGRIHIVEPDLDMLVRAAVSQGYLRATTEPEPADAFLIAVPTPFLDNKQPDLSYIEAAARAIAPVLKRGDLVVLESTSPVGATEQLSDWLSAQRPDLSFPHQQGEESDIRVAHCPERVLPGHVLRELVENDRIIGGMTPKCSEAAQRLYELFVRGRCIVTDARTAEMCKLTENAFRDVNIAFANELSMICDEIGVNVWELISVANRHPRVNILQPGPGVGGHCIAVDPWFIVDAAPESARLIRTAREVNDAKPHYVLDRVKQAARRFKEPVIACFGLSFKANIDDLRESPAIEIVQTMVQQQLGTVLVVEPHIKVLPAALQGVELLNAEAALSRADIVVLLVDHQQFRKLDTDRLQSRVVIDTRGMWSAKRIAA</sequence>
<proteinExistence type="inferred from homology"/>
<gene>
    <name type="primary">epsD</name>
    <name type="ordered locus">RSp1016</name>
    <name type="ORF">RS02350</name>
</gene>
<keyword id="KW-0448">Lipopolysaccharide biosynthesis</keyword>
<keyword id="KW-0520">NAD</keyword>
<keyword id="KW-0560">Oxidoreductase</keyword>
<keyword id="KW-0614">Plasmid</keyword>
<keyword id="KW-1185">Reference proteome</keyword>
<reference key="1">
    <citation type="journal article" date="2002" name="Nature">
        <title>Genome sequence of the plant pathogen Ralstonia solanacearum.</title>
        <authorList>
            <person name="Salanoubat M."/>
            <person name="Genin S."/>
            <person name="Artiguenave F."/>
            <person name="Gouzy J."/>
            <person name="Mangenot S."/>
            <person name="Arlat M."/>
            <person name="Billault A."/>
            <person name="Brottier P."/>
            <person name="Camus J.-C."/>
            <person name="Cattolico L."/>
            <person name="Chandler M."/>
            <person name="Choisne N."/>
            <person name="Claudel-Renard C."/>
            <person name="Cunnac S."/>
            <person name="Demange N."/>
            <person name="Gaspin C."/>
            <person name="Lavie M."/>
            <person name="Moisan A."/>
            <person name="Robert C."/>
            <person name="Saurin W."/>
            <person name="Schiex T."/>
            <person name="Siguier P."/>
            <person name="Thebault P."/>
            <person name="Whalen M."/>
            <person name="Wincker P."/>
            <person name="Levy M."/>
            <person name="Weissenbach J."/>
            <person name="Boucher C.A."/>
        </authorList>
    </citation>
    <scope>NUCLEOTIDE SEQUENCE [LARGE SCALE GENOMIC DNA]</scope>
    <source>
        <strain>ATCC BAA-1114 / GMI1000</strain>
    </source>
</reference>
<feature type="chain" id="PRO_0000074073" description="NDP-N-acetyl-D-galactosaminuronic acid dehydrogenase">
    <location>
        <begin position="1"/>
        <end position="423"/>
    </location>
</feature>
<feature type="active site" description="Proton donor/acceptor" evidence="2">
    <location>
        <position position="218"/>
    </location>
</feature>
<feature type="active site" description="Nucleophile" evidence="2">
    <location>
        <position position="272"/>
    </location>
</feature>
<feature type="binding site" evidence="3">
    <location>
        <begin position="11"/>
        <end position="28"/>
    </location>
    <ligand>
        <name>NAD(+)</name>
        <dbReference type="ChEBI" id="CHEBI:57540"/>
    </ligand>
</feature>
<name>EPSD_RALN1</name>
<geneLocation type="plasmid">
    <name>megaplasmid Rsp</name>
</geneLocation>
<protein>
    <recommendedName>
        <fullName>NDP-N-acetyl-D-galactosaminuronic acid dehydrogenase</fullName>
        <ecNumber>1.1.1.-</ecNumber>
    </recommendedName>
</protein>